<dbReference type="EC" id="5.6.2.-" evidence="1"/>
<dbReference type="EMBL" id="CH479190">
    <property type="protein sequence ID" value="EDW26039.1"/>
    <property type="molecule type" value="Genomic_DNA"/>
</dbReference>
<dbReference type="SMR" id="B4GU19"/>
<dbReference type="STRING" id="7234.B4GU19"/>
<dbReference type="EnsemblMetazoa" id="FBtr0180078">
    <property type="protein sequence ID" value="FBpp0178570"/>
    <property type="gene ID" value="FBgn0152068"/>
</dbReference>
<dbReference type="EnsemblMetazoa" id="XM_002022062.2">
    <property type="protein sequence ID" value="XP_002022098.1"/>
    <property type="gene ID" value="LOC6596883"/>
</dbReference>
<dbReference type="EnsemblMetazoa" id="XM_026990046.1">
    <property type="protein sequence ID" value="XP_026845847.1"/>
    <property type="gene ID" value="LOC6596883"/>
</dbReference>
<dbReference type="GeneID" id="6596883"/>
<dbReference type="KEGG" id="dpe:6596883"/>
<dbReference type="CTD" id="51750"/>
<dbReference type="eggNOG" id="KOG1132">
    <property type="taxonomic scope" value="Eukaryota"/>
</dbReference>
<dbReference type="HOGENOM" id="CLU_006515_4_0_1"/>
<dbReference type="OMA" id="NCATIVA"/>
<dbReference type="OrthoDB" id="19182at2759"/>
<dbReference type="PhylomeDB" id="B4GU19"/>
<dbReference type="Proteomes" id="UP000008744">
    <property type="component" value="Unassembled WGS sequence"/>
</dbReference>
<dbReference type="GO" id="GO:0005634">
    <property type="term" value="C:nucleus"/>
    <property type="evidence" value="ECO:0000250"/>
    <property type="project" value="UniProtKB"/>
</dbReference>
<dbReference type="GO" id="GO:0051539">
    <property type="term" value="F:4 iron, 4 sulfur cluster binding"/>
    <property type="evidence" value="ECO:0007669"/>
    <property type="project" value="UniProtKB-UniRule"/>
</dbReference>
<dbReference type="GO" id="GO:0005524">
    <property type="term" value="F:ATP binding"/>
    <property type="evidence" value="ECO:0000250"/>
    <property type="project" value="UniProtKB"/>
</dbReference>
<dbReference type="GO" id="GO:0016887">
    <property type="term" value="F:ATP hydrolysis activity"/>
    <property type="evidence" value="ECO:0007669"/>
    <property type="project" value="RHEA"/>
</dbReference>
<dbReference type="GO" id="GO:0003682">
    <property type="term" value="F:chromatin binding"/>
    <property type="evidence" value="ECO:0007669"/>
    <property type="project" value="EnsemblMetazoa"/>
</dbReference>
<dbReference type="GO" id="GO:0003677">
    <property type="term" value="F:DNA binding"/>
    <property type="evidence" value="ECO:0007669"/>
    <property type="project" value="UniProtKB-UniRule"/>
</dbReference>
<dbReference type="GO" id="GO:0003678">
    <property type="term" value="F:DNA helicase activity"/>
    <property type="evidence" value="ECO:0000250"/>
    <property type="project" value="UniProtKB"/>
</dbReference>
<dbReference type="GO" id="GO:0070182">
    <property type="term" value="F:DNA polymerase binding"/>
    <property type="evidence" value="ECO:0007669"/>
    <property type="project" value="TreeGrafter"/>
</dbReference>
<dbReference type="GO" id="GO:0046872">
    <property type="term" value="F:metal ion binding"/>
    <property type="evidence" value="ECO:0007669"/>
    <property type="project" value="UniProtKB-UniRule"/>
</dbReference>
<dbReference type="GO" id="GO:0006310">
    <property type="term" value="P:DNA recombination"/>
    <property type="evidence" value="ECO:0007669"/>
    <property type="project" value="InterPro"/>
</dbReference>
<dbReference type="GO" id="GO:0006281">
    <property type="term" value="P:DNA repair"/>
    <property type="evidence" value="ECO:0007669"/>
    <property type="project" value="UniProtKB-UniRule"/>
</dbReference>
<dbReference type="GO" id="GO:0006260">
    <property type="term" value="P:DNA replication"/>
    <property type="evidence" value="ECO:0007669"/>
    <property type="project" value="InterPro"/>
</dbReference>
<dbReference type="GO" id="GO:0036098">
    <property type="term" value="P:male germ-line stem cell population maintenance"/>
    <property type="evidence" value="ECO:0007669"/>
    <property type="project" value="EnsemblMetazoa"/>
</dbReference>
<dbReference type="GO" id="GO:0045910">
    <property type="term" value="P:negative regulation of DNA recombination"/>
    <property type="evidence" value="ECO:0007669"/>
    <property type="project" value="TreeGrafter"/>
</dbReference>
<dbReference type="GO" id="GO:1904430">
    <property type="term" value="P:negative regulation of t-circle formation"/>
    <property type="evidence" value="ECO:0007669"/>
    <property type="project" value="TreeGrafter"/>
</dbReference>
<dbReference type="GO" id="GO:0010569">
    <property type="term" value="P:regulation of double-strand break repair via homologous recombination"/>
    <property type="evidence" value="ECO:0000250"/>
    <property type="project" value="UniProtKB"/>
</dbReference>
<dbReference type="GO" id="GO:0090657">
    <property type="term" value="P:telomeric loop disassembly"/>
    <property type="evidence" value="ECO:0007669"/>
    <property type="project" value="TreeGrafter"/>
</dbReference>
<dbReference type="CDD" id="cd17970">
    <property type="entry name" value="DEAHc_FancJ"/>
    <property type="match status" value="1"/>
</dbReference>
<dbReference type="CDD" id="cd13932">
    <property type="entry name" value="HN_RTEL1"/>
    <property type="match status" value="1"/>
</dbReference>
<dbReference type="CDD" id="cd18788">
    <property type="entry name" value="SF2_C_XPD"/>
    <property type="match status" value="1"/>
</dbReference>
<dbReference type="FunFam" id="3.40.50.300:FF:000431">
    <property type="entry name" value="Regulator of telomere elongation helicase 1"/>
    <property type="match status" value="1"/>
</dbReference>
<dbReference type="FunFam" id="1.20.1160.20:FF:000011">
    <property type="entry name" value="Regulator of telomere elongation helicase 1 homolog"/>
    <property type="match status" value="1"/>
</dbReference>
<dbReference type="Gene3D" id="1.20.1160.20">
    <property type="match status" value="1"/>
</dbReference>
<dbReference type="Gene3D" id="3.40.50.300">
    <property type="entry name" value="P-loop containing nucleotide triphosphate hydrolases"/>
    <property type="match status" value="2"/>
</dbReference>
<dbReference type="HAMAP" id="MF_03065">
    <property type="entry name" value="RTEL1"/>
    <property type="match status" value="1"/>
</dbReference>
<dbReference type="InterPro" id="IPR006555">
    <property type="entry name" value="ATP-dep_Helicase_C"/>
</dbReference>
<dbReference type="InterPro" id="IPR045028">
    <property type="entry name" value="DinG/Rad3-like"/>
</dbReference>
<dbReference type="InterPro" id="IPR014013">
    <property type="entry name" value="Helic_SF1/SF2_ATP-bd_DinG/Rad3"/>
</dbReference>
<dbReference type="InterPro" id="IPR006554">
    <property type="entry name" value="Helicase-like_DEXD_c2"/>
</dbReference>
<dbReference type="InterPro" id="IPR049909">
    <property type="entry name" value="HHD_RTEL1"/>
</dbReference>
<dbReference type="InterPro" id="IPR027417">
    <property type="entry name" value="P-loop_NTPase"/>
</dbReference>
<dbReference type="InterPro" id="IPR010614">
    <property type="entry name" value="RAD3-like_helicase_DEAD"/>
</dbReference>
<dbReference type="InterPro" id="IPR013020">
    <property type="entry name" value="Rad3/Chl1-like"/>
</dbReference>
<dbReference type="InterPro" id="IPR030845">
    <property type="entry name" value="RTEL1"/>
</dbReference>
<dbReference type="NCBIfam" id="TIGR00604">
    <property type="entry name" value="rad3"/>
    <property type="match status" value="1"/>
</dbReference>
<dbReference type="PANTHER" id="PTHR11472">
    <property type="entry name" value="DNA REPAIR DEAD HELICASE RAD3/XP-D SUBFAMILY MEMBER"/>
    <property type="match status" value="1"/>
</dbReference>
<dbReference type="PANTHER" id="PTHR11472:SF34">
    <property type="entry name" value="REGULATOR OF TELOMERE ELONGATION HELICASE 1"/>
    <property type="match status" value="1"/>
</dbReference>
<dbReference type="Pfam" id="PF23109">
    <property type="entry name" value="ARCH_RTEL1"/>
    <property type="match status" value="1"/>
</dbReference>
<dbReference type="Pfam" id="PF06733">
    <property type="entry name" value="DEAD_2"/>
    <property type="match status" value="1"/>
</dbReference>
<dbReference type="Pfam" id="PF13307">
    <property type="entry name" value="Helicase_C_2"/>
    <property type="match status" value="1"/>
</dbReference>
<dbReference type="SMART" id="SM00488">
    <property type="entry name" value="DEXDc2"/>
    <property type="match status" value="1"/>
</dbReference>
<dbReference type="SMART" id="SM00491">
    <property type="entry name" value="HELICc2"/>
    <property type="match status" value="1"/>
</dbReference>
<dbReference type="SUPFAM" id="SSF52540">
    <property type="entry name" value="P-loop containing nucleoside triphosphate hydrolases"/>
    <property type="match status" value="2"/>
</dbReference>
<dbReference type="PROSITE" id="PS51193">
    <property type="entry name" value="HELICASE_ATP_BIND_2"/>
    <property type="match status" value="1"/>
</dbReference>
<evidence type="ECO:0000255" key="1">
    <source>
        <dbReference type="HAMAP-Rule" id="MF_03065"/>
    </source>
</evidence>
<gene>
    <name type="ORF">GL14463</name>
</gene>
<proteinExistence type="inferred from homology"/>
<keyword id="KW-0004">4Fe-4S</keyword>
<keyword id="KW-0067">ATP-binding</keyword>
<keyword id="KW-0227">DNA damage</keyword>
<keyword id="KW-0234">DNA repair</keyword>
<keyword id="KW-0238">DNA-binding</keyword>
<keyword id="KW-0347">Helicase</keyword>
<keyword id="KW-0378">Hydrolase</keyword>
<keyword id="KW-0408">Iron</keyword>
<keyword id="KW-0411">Iron-sulfur</keyword>
<keyword id="KW-0413">Isomerase</keyword>
<keyword id="KW-0479">Metal-binding</keyword>
<keyword id="KW-0547">Nucleotide-binding</keyword>
<keyword id="KW-0539">Nucleus</keyword>
<keyword id="KW-1185">Reference proteome</keyword>
<sequence length="1009" mass="112191">MPESVIAGIPVHFPFEPYNVQRDYMEKVIICLRDGTNGVLESPTGTGKTLSLLCASLAWIRTRQSEHQQQMIKLKATSKEGGPGSGPGGDLSELAMTVGQANNWGVPKVIYASRTHSQLNQAMRELKRTAYANMRSVVLGSRDQLCIHPEVMKEQGNSNKVNLCKLRVHSKTCTFQLRVESKKDHPDFRGPSIMDIEDLVRVGQKLKMCPYYASKELVAQADITFMPYNYLLDPKARKANKIELGNTIIILDEAHNIEKICEESASVQIRSSDVAMAIEDVTHIMKVFTSGESQEAGGDEPKDFTLDDLTLLKEMLLELEKAIDAVVVDNPTDGTTYPASLMYELLGKANFTYGNCATIVALLDKLVQYLMVASQHMTIRKGGTFTMLSDLLTIVFANKENIMSKVHLSFKVHVQVEESNKQQGKSGAIQGKQQGWLGKGNITTTGTSSKAAKIVNFWCFNPGFGMEQLLNTQVRSVILTSGTLAPLKPLIAELAIPVAQHLENPHIVDQSQVYVKIIGTGPDRQQLISNFKNRDNPKYISSLGQTILNVARIVPDGLLVFFPSYPMLNKCVDAWQASGLWADISCKKPIFVEPRGKDQFTSTMEEFYQAIRDSKGAVFMAVCRGKVSEGLDFADRNGRAVIITGLPFPPLKDPKVILKRRYLETNRTKENQLLSGQEWYNLDATRAVNQAIGRVIRHRNDYGAILLCDSRFQDASQVQQLSKWIRGHLGARPQSSPFGPIVRELRQFFKHAEETMKQPDVREEEQPLMNVCKVEEVGTQPVIPTIKQEPGNNATFRKANKSAIKVEMANSINSWTPADYASAAGRTLGKAAPNAMDFMSRLDSNVSSIDFNCSGSADSGSGGCGSSSLVTIHKRERSSPGVTDTVATQTTKKRYKLAENIKTEPKSNSSQQVKVAPESRADFLRELRSLISQDQFRDFGKVLIEYRSGTDENFESLMTVLLDVLAAPKMRYLFIGMRRFLRNEHKAEFDVRLASLNLAQESSPNKRIP</sequence>
<comment type="function">
    <text evidence="1">A probable ATP-dependent DNA helicase implicated in DNA repair and the maintenance of genomic stability. Acts as an anti-recombinase to counteract toxic recombination and limit crossover during meiosis. Regulates meiotic recombination and crossover homeostasis by physically dissociating strand invasion events and thereby promotes noncrossover repair by meiotic synthesis dependent strand annealing (SDSA) as well as disassembly of D loop recombination intermediates.</text>
</comment>
<comment type="catalytic activity">
    <reaction evidence="1">
        <text>ATP + H2O = ADP + phosphate + H(+)</text>
        <dbReference type="Rhea" id="RHEA:13065"/>
        <dbReference type="ChEBI" id="CHEBI:15377"/>
        <dbReference type="ChEBI" id="CHEBI:15378"/>
        <dbReference type="ChEBI" id="CHEBI:30616"/>
        <dbReference type="ChEBI" id="CHEBI:43474"/>
        <dbReference type="ChEBI" id="CHEBI:456216"/>
    </reaction>
</comment>
<comment type="subcellular location">
    <subcellularLocation>
        <location evidence="1">Nucleus</location>
    </subcellularLocation>
</comment>
<comment type="similarity">
    <text evidence="1">Belongs to the helicase family. RAD3/XPD subfamily.</text>
</comment>
<accession>B4GU19</accession>
<organism>
    <name type="scientific">Drosophila persimilis</name>
    <name type="common">Fruit fly</name>
    <dbReference type="NCBI Taxonomy" id="7234"/>
    <lineage>
        <taxon>Eukaryota</taxon>
        <taxon>Metazoa</taxon>
        <taxon>Ecdysozoa</taxon>
        <taxon>Arthropoda</taxon>
        <taxon>Hexapoda</taxon>
        <taxon>Insecta</taxon>
        <taxon>Pterygota</taxon>
        <taxon>Neoptera</taxon>
        <taxon>Endopterygota</taxon>
        <taxon>Diptera</taxon>
        <taxon>Brachycera</taxon>
        <taxon>Muscomorpha</taxon>
        <taxon>Ephydroidea</taxon>
        <taxon>Drosophilidae</taxon>
        <taxon>Drosophila</taxon>
        <taxon>Sophophora</taxon>
    </lineage>
</organism>
<reference key="1">
    <citation type="journal article" date="2007" name="Nature">
        <title>Evolution of genes and genomes on the Drosophila phylogeny.</title>
        <authorList>
            <consortium name="Drosophila 12 genomes consortium"/>
        </authorList>
    </citation>
    <scope>NUCLEOTIDE SEQUENCE [LARGE SCALE GENOMIC DNA]</scope>
    <source>
        <strain>MSH-3 / Tucson 14011-0111.49</strain>
    </source>
</reference>
<feature type="chain" id="PRO_0000370625" description="Regulator of telomere elongation helicase 1 homolog">
    <location>
        <begin position="1"/>
        <end position="1009"/>
    </location>
</feature>
<feature type="domain" description="Helicase ATP-binding" evidence="1">
    <location>
        <begin position="7"/>
        <end position="322"/>
    </location>
</feature>
<feature type="short sequence motif" description="DEAH box">
    <location>
        <begin position="252"/>
        <end position="255"/>
    </location>
</feature>
<feature type="binding site" evidence="1">
    <location>
        <begin position="42"/>
        <end position="49"/>
    </location>
    <ligand>
        <name>ATP</name>
        <dbReference type="ChEBI" id="CHEBI:30616"/>
    </ligand>
</feature>
<feature type="binding site" evidence="1">
    <location>
        <position position="146"/>
    </location>
    <ligand>
        <name>[4Fe-4S] cluster</name>
        <dbReference type="ChEBI" id="CHEBI:49883"/>
    </ligand>
</feature>
<feature type="binding site" evidence="1">
    <location>
        <position position="164"/>
    </location>
    <ligand>
        <name>[4Fe-4S] cluster</name>
        <dbReference type="ChEBI" id="CHEBI:49883"/>
    </ligand>
</feature>
<feature type="binding site" evidence="1">
    <location>
        <position position="173"/>
    </location>
    <ligand>
        <name>[4Fe-4S] cluster</name>
        <dbReference type="ChEBI" id="CHEBI:49883"/>
    </ligand>
</feature>
<feature type="binding site" evidence="1">
    <location>
        <position position="209"/>
    </location>
    <ligand>
        <name>[4Fe-4S] cluster</name>
        <dbReference type="ChEBI" id="CHEBI:49883"/>
    </ligand>
</feature>
<name>RTEL1_DROPE</name>
<protein>
    <recommendedName>
        <fullName evidence="1">Regulator of telomere elongation helicase 1 homolog</fullName>
        <ecNumber evidence="1">5.6.2.-</ecNumber>
    </recommendedName>
</protein>